<reference key="1">
    <citation type="journal article" date="1997" name="Nature">
        <title>The complete genome sequence of the Gram-positive bacterium Bacillus subtilis.</title>
        <authorList>
            <person name="Kunst F."/>
            <person name="Ogasawara N."/>
            <person name="Moszer I."/>
            <person name="Albertini A.M."/>
            <person name="Alloni G."/>
            <person name="Azevedo V."/>
            <person name="Bertero M.G."/>
            <person name="Bessieres P."/>
            <person name="Bolotin A."/>
            <person name="Borchert S."/>
            <person name="Borriss R."/>
            <person name="Boursier L."/>
            <person name="Brans A."/>
            <person name="Braun M."/>
            <person name="Brignell S.C."/>
            <person name="Bron S."/>
            <person name="Brouillet S."/>
            <person name="Bruschi C.V."/>
            <person name="Caldwell B."/>
            <person name="Capuano V."/>
            <person name="Carter N.M."/>
            <person name="Choi S.-K."/>
            <person name="Codani J.-J."/>
            <person name="Connerton I.F."/>
            <person name="Cummings N.J."/>
            <person name="Daniel R.A."/>
            <person name="Denizot F."/>
            <person name="Devine K.M."/>
            <person name="Duesterhoeft A."/>
            <person name="Ehrlich S.D."/>
            <person name="Emmerson P.T."/>
            <person name="Entian K.-D."/>
            <person name="Errington J."/>
            <person name="Fabret C."/>
            <person name="Ferrari E."/>
            <person name="Foulger D."/>
            <person name="Fritz C."/>
            <person name="Fujita M."/>
            <person name="Fujita Y."/>
            <person name="Fuma S."/>
            <person name="Galizzi A."/>
            <person name="Galleron N."/>
            <person name="Ghim S.-Y."/>
            <person name="Glaser P."/>
            <person name="Goffeau A."/>
            <person name="Golightly E.J."/>
            <person name="Grandi G."/>
            <person name="Guiseppi G."/>
            <person name="Guy B.J."/>
            <person name="Haga K."/>
            <person name="Haiech J."/>
            <person name="Harwood C.R."/>
            <person name="Henaut A."/>
            <person name="Hilbert H."/>
            <person name="Holsappel S."/>
            <person name="Hosono S."/>
            <person name="Hullo M.-F."/>
            <person name="Itaya M."/>
            <person name="Jones L.-M."/>
            <person name="Joris B."/>
            <person name="Karamata D."/>
            <person name="Kasahara Y."/>
            <person name="Klaerr-Blanchard M."/>
            <person name="Klein C."/>
            <person name="Kobayashi Y."/>
            <person name="Koetter P."/>
            <person name="Koningstein G."/>
            <person name="Krogh S."/>
            <person name="Kumano M."/>
            <person name="Kurita K."/>
            <person name="Lapidus A."/>
            <person name="Lardinois S."/>
            <person name="Lauber J."/>
            <person name="Lazarevic V."/>
            <person name="Lee S.-M."/>
            <person name="Levine A."/>
            <person name="Liu H."/>
            <person name="Masuda S."/>
            <person name="Mauel C."/>
            <person name="Medigue C."/>
            <person name="Medina N."/>
            <person name="Mellado R.P."/>
            <person name="Mizuno M."/>
            <person name="Moestl D."/>
            <person name="Nakai S."/>
            <person name="Noback M."/>
            <person name="Noone D."/>
            <person name="O'Reilly M."/>
            <person name="Ogawa K."/>
            <person name="Ogiwara A."/>
            <person name="Oudega B."/>
            <person name="Park S.-H."/>
            <person name="Parro V."/>
            <person name="Pohl T.M."/>
            <person name="Portetelle D."/>
            <person name="Porwollik S."/>
            <person name="Prescott A.M."/>
            <person name="Presecan E."/>
            <person name="Pujic P."/>
            <person name="Purnelle B."/>
            <person name="Rapoport G."/>
            <person name="Rey M."/>
            <person name="Reynolds S."/>
            <person name="Rieger M."/>
            <person name="Rivolta C."/>
            <person name="Rocha E."/>
            <person name="Roche B."/>
            <person name="Rose M."/>
            <person name="Sadaie Y."/>
            <person name="Sato T."/>
            <person name="Scanlan E."/>
            <person name="Schleich S."/>
            <person name="Schroeter R."/>
            <person name="Scoffone F."/>
            <person name="Sekiguchi J."/>
            <person name="Sekowska A."/>
            <person name="Seror S.J."/>
            <person name="Serror P."/>
            <person name="Shin B.-S."/>
            <person name="Soldo B."/>
            <person name="Sorokin A."/>
            <person name="Tacconi E."/>
            <person name="Takagi T."/>
            <person name="Takahashi H."/>
            <person name="Takemaru K."/>
            <person name="Takeuchi M."/>
            <person name="Tamakoshi A."/>
            <person name="Tanaka T."/>
            <person name="Terpstra P."/>
            <person name="Tognoni A."/>
            <person name="Tosato V."/>
            <person name="Uchiyama S."/>
            <person name="Vandenbol M."/>
            <person name="Vannier F."/>
            <person name="Vassarotti A."/>
            <person name="Viari A."/>
            <person name="Wambutt R."/>
            <person name="Wedler E."/>
            <person name="Wedler H."/>
            <person name="Weitzenegger T."/>
            <person name="Winters P."/>
            <person name="Wipat A."/>
            <person name="Yamamoto H."/>
            <person name="Yamane K."/>
            <person name="Yasumoto K."/>
            <person name="Yata K."/>
            <person name="Yoshida K."/>
            <person name="Yoshikawa H.-F."/>
            <person name="Zumstein E."/>
            <person name="Yoshikawa H."/>
            <person name="Danchin A."/>
        </authorList>
    </citation>
    <scope>NUCLEOTIDE SEQUENCE [LARGE SCALE GENOMIC DNA]</scope>
    <source>
        <strain>168</strain>
    </source>
</reference>
<reference key="2">
    <citation type="journal article" date="2001" name="FEMS Microbiol. Lett.">
        <title>Functional analysis of the Bacillus subtilis cysK and cysJI genes.</title>
        <authorList>
            <person name="van der Ploeg J.R."/>
            <person name="Barone M."/>
            <person name="Leisinger T."/>
        </authorList>
    </citation>
    <scope>FUNCTION IN SULFATE ASSIMILATION</scope>
    <scope>DISRUPTION PHENOTYPE</scope>
    <scope>INDUCTION</scope>
    <source>
        <strain>168 / BGSC1A1</strain>
    </source>
</reference>
<reference key="3">
    <citation type="journal article" date="2002" name="J. Bacteriol.">
        <title>Identification of Bacillus subtilis CysL, a regulator of the cysJI operon, which encodes sulfite reductase.</title>
        <authorList>
            <person name="Guillouard I."/>
            <person name="Auger S."/>
            <person name="Hullo M.-F."/>
            <person name="Chetouani F."/>
            <person name="Danchin A."/>
            <person name="Martin-Verstraete I."/>
        </authorList>
    </citation>
    <scope>INDUCTION</scope>
    <source>
        <strain>168</strain>
    </source>
</reference>
<comment type="function">
    <text evidence="7">Component of the sulfite reductase complex that catalyzes the 6-electron reduction of sulfite to sulfide. This is one of several activities required for the biosynthesis of L-cysteine from sulfate. The flavoprotein component catalyzes the electron flow from NADPH -&gt; FAD -&gt; FMN to the hemoprotein component (Probable).</text>
</comment>
<comment type="catalytic activity">
    <reaction>
        <text>hydrogen sulfide + 3 NADP(+) + 3 H2O = sulfite + 3 NADPH + 4 H(+)</text>
        <dbReference type="Rhea" id="RHEA:13801"/>
        <dbReference type="ChEBI" id="CHEBI:15377"/>
        <dbReference type="ChEBI" id="CHEBI:15378"/>
        <dbReference type="ChEBI" id="CHEBI:17359"/>
        <dbReference type="ChEBI" id="CHEBI:29919"/>
        <dbReference type="ChEBI" id="CHEBI:57783"/>
        <dbReference type="ChEBI" id="CHEBI:58349"/>
        <dbReference type="EC" id="1.8.1.2"/>
    </reaction>
</comment>
<comment type="cofactor">
    <cofactor evidence="1">
        <name>FAD</name>
        <dbReference type="ChEBI" id="CHEBI:57692"/>
    </cofactor>
    <text evidence="1">Binds 1 FAD per subunit.</text>
</comment>
<comment type="cofactor">
    <cofactor evidence="1">
        <name>FMN</name>
        <dbReference type="ChEBI" id="CHEBI:58210"/>
    </cofactor>
    <text evidence="1">Binds 1 FMN per subunit.</text>
</comment>
<comment type="pathway">
    <text>Sulfur metabolism; hydrogen sulfide biosynthesis; hydrogen sulfide from sulfite (NADPH route): step 1/1.</text>
</comment>
<comment type="subunit">
    <text evidence="1">Alpha(8)-beta(8). The alpha component is a flavoprotein, the beta component is a hemoprotein (By similarity).</text>
</comment>
<comment type="induction">
    <text evidence="5 6">Up-regulated by sulfate and the transcriptional regulator CysL.</text>
</comment>
<comment type="disruption phenotype">
    <text evidence="5">Cells lacking the cysIJ genes are unable to use sulfate, sulfite or butanesulfonate as sole sulfur source, grow poorly with sulfide, but can still grow with thiosulfate, cysteine or methionine.</text>
</comment>
<accession>O32214</accession>
<organism>
    <name type="scientific">Bacillus subtilis (strain 168)</name>
    <dbReference type="NCBI Taxonomy" id="224308"/>
    <lineage>
        <taxon>Bacteria</taxon>
        <taxon>Bacillati</taxon>
        <taxon>Bacillota</taxon>
        <taxon>Bacilli</taxon>
        <taxon>Bacillales</taxon>
        <taxon>Bacillaceae</taxon>
        <taxon>Bacillus</taxon>
    </lineage>
</organism>
<dbReference type="EC" id="1.8.1.2"/>
<dbReference type="EMBL" id="AL009126">
    <property type="protein sequence ID" value="CAB15349.1"/>
    <property type="molecule type" value="Genomic_DNA"/>
</dbReference>
<dbReference type="PIR" id="G70040">
    <property type="entry name" value="G70040"/>
</dbReference>
<dbReference type="RefSeq" id="NP_391224.1">
    <property type="nucleotide sequence ID" value="NC_000964.3"/>
</dbReference>
<dbReference type="RefSeq" id="WP_003243259.1">
    <property type="nucleotide sequence ID" value="NZ_OZ025638.1"/>
</dbReference>
<dbReference type="SMR" id="O32214"/>
<dbReference type="FunCoup" id="O32214">
    <property type="interactions" value="87"/>
</dbReference>
<dbReference type="STRING" id="224308.BSU33440"/>
<dbReference type="PaxDb" id="224308-BSU33440"/>
<dbReference type="EnsemblBacteria" id="CAB15349">
    <property type="protein sequence ID" value="CAB15349"/>
    <property type="gene ID" value="BSU_33440"/>
</dbReference>
<dbReference type="GeneID" id="936022"/>
<dbReference type="KEGG" id="bsu:BSU33440"/>
<dbReference type="PATRIC" id="fig|224308.179.peg.3629"/>
<dbReference type="eggNOG" id="COG0369">
    <property type="taxonomic scope" value="Bacteria"/>
</dbReference>
<dbReference type="InParanoid" id="O32214"/>
<dbReference type="OrthoDB" id="9789468at2"/>
<dbReference type="PhylomeDB" id="O32214"/>
<dbReference type="BioCyc" id="BSUB:BSU33440-MONOMER"/>
<dbReference type="UniPathway" id="UPA00140">
    <property type="reaction ID" value="UER00207"/>
</dbReference>
<dbReference type="Proteomes" id="UP000001570">
    <property type="component" value="Chromosome"/>
</dbReference>
<dbReference type="GO" id="GO:0005829">
    <property type="term" value="C:cytosol"/>
    <property type="evidence" value="ECO:0000318"/>
    <property type="project" value="GO_Central"/>
</dbReference>
<dbReference type="GO" id="GO:0050660">
    <property type="term" value="F:flavin adenine dinucleotide binding"/>
    <property type="evidence" value="ECO:0000318"/>
    <property type="project" value="GO_Central"/>
</dbReference>
<dbReference type="GO" id="GO:0010181">
    <property type="term" value="F:FMN binding"/>
    <property type="evidence" value="ECO:0000318"/>
    <property type="project" value="GO_Central"/>
</dbReference>
<dbReference type="GO" id="GO:0016491">
    <property type="term" value="F:oxidoreductase activity"/>
    <property type="evidence" value="ECO:0000318"/>
    <property type="project" value="GO_Central"/>
</dbReference>
<dbReference type="GO" id="GO:0016651">
    <property type="term" value="F:oxidoreductase activity, acting on NAD(P)H"/>
    <property type="evidence" value="ECO:0007669"/>
    <property type="project" value="UniProtKB-ARBA"/>
</dbReference>
<dbReference type="GO" id="GO:0004783">
    <property type="term" value="F:sulfite reductase (NADPH) activity"/>
    <property type="evidence" value="ECO:0007669"/>
    <property type="project" value="UniProtKB-EC"/>
</dbReference>
<dbReference type="GO" id="GO:0019344">
    <property type="term" value="P:cysteine biosynthetic process"/>
    <property type="evidence" value="ECO:0007669"/>
    <property type="project" value="UniProtKB-KW"/>
</dbReference>
<dbReference type="GO" id="GO:0070814">
    <property type="term" value="P:hydrogen sulfide biosynthetic process"/>
    <property type="evidence" value="ECO:0007669"/>
    <property type="project" value="UniProtKB-UniPathway"/>
</dbReference>
<dbReference type="CDD" id="cd06199">
    <property type="entry name" value="SiR"/>
    <property type="match status" value="1"/>
</dbReference>
<dbReference type="FunFam" id="3.40.50.80:FF:000001">
    <property type="entry name" value="NADPH--cytochrome P450 reductase 1"/>
    <property type="match status" value="1"/>
</dbReference>
<dbReference type="Gene3D" id="3.40.50.360">
    <property type="match status" value="1"/>
</dbReference>
<dbReference type="Gene3D" id="1.20.990.10">
    <property type="entry name" value="NADPH-cytochrome p450 Reductase, Chain A, domain 3"/>
    <property type="match status" value="1"/>
</dbReference>
<dbReference type="Gene3D" id="3.40.50.80">
    <property type="entry name" value="Nucleotide-binding domain of ferredoxin-NADP reductase (FNR) module"/>
    <property type="match status" value="1"/>
</dbReference>
<dbReference type="Gene3D" id="2.40.30.10">
    <property type="entry name" value="Translation factors"/>
    <property type="match status" value="1"/>
</dbReference>
<dbReference type="InterPro" id="IPR010199">
    <property type="entry name" value="CysJ"/>
</dbReference>
<dbReference type="InterPro" id="IPR003097">
    <property type="entry name" value="CysJ-like_FAD-binding"/>
</dbReference>
<dbReference type="InterPro" id="IPR017927">
    <property type="entry name" value="FAD-bd_FR_type"/>
</dbReference>
<dbReference type="InterPro" id="IPR001094">
    <property type="entry name" value="Flavdoxin-like"/>
</dbReference>
<dbReference type="InterPro" id="IPR008254">
    <property type="entry name" value="Flavodoxin/NO_synth"/>
</dbReference>
<dbReference type="InterPro" id="IPR001709">
    <property type="entry name" value="Flavoprot_Pyr_Nucl_cyt_Rdtase"/>
</dbReference>
<dbReference type="InterPro" id="IPR029039">
    <property type="entry name" value="Flavoprotein-like_sf"/>
</dbReference>
<dbReference type="InterPro" id="IPR039261">
    <property type="entry name" value="FNR_nucleotide-bd"/>
</dbReference>
<dbReference type="InterPro" id="IPR023173">
    <property type="entry name" value="NADPH_Cyt_P450_Rdtase_alpha"/>
</dbReference>
<dbReference type="InterPro" id="IPR001433">
    <property type="entry name" value="OxRdtase_FAD/NAD-bd"/>
</dbReference>
<dbReference type="InterPro" id="IPR017938">
    <property type="entry name" value="Riboflavin_synthase-like_b-brl"/>
</dbReference>
<dbReference type="NCBIfam" id="TIGR01931">
    <property type="entry name" value="cysJ"/>
    <property type="match status" value="1"/>
</dbReference>
<dbReference type="NCBIfam" id="NF004859">
    <property type="entry name" value="PRK06214.1"/>
    <property type="match status" value="1"/>
</dbReference>
<dbReference type="PANTHER" id="PTHR19384:SF128">
    <property type="entry name" value="NADPH OXIDOREDUCTASE A"/>
    <property type="match status" value="1"/>
</dbReference>
<dbReference type="PANTHER" id="PTHR19384">
    <property type="entry name" value="NITRIC OXIDE SYNTHASE-RELATED"/>
    <property type="match status" value="1"/>
</dbReference>
<dbReference type="Pfam" id="PF00667">
    <property type="entry name" value="FAD_binding_1"/>
    <property type="match status" value="1"/>
</dbReference>
<dbReference type="Pfam" id="PF00258">
    <property type="entry name" value="Flavodoxin_1"/>
    <property type="match status" value="1"/>
</dbReference>
<dbReference type="Pfam" id="PF00175">
    <property type="entry name" value="NAD_binding_1"/>
    <property type="match status" value="1"/>
</dbReference>
<dbReference type="PIRSF" id="PIRSF000207">
    <property type="entry name" value="SiR-FP_CysJ"/>
    <property type="match status" value="1"/>
</dbReference>
<dbReference type="PRINTS" id="PR00369">
    <property type="entry name" value="FLAVODOXIN"/>
</dbReference>
<dbReference type="PRINTS" id="PR00371">
    <property type="entry name" value="FPNCR"/>
</dbReference>
<dbReference type="SUPFAM" id="SSF52343">
    <property type="entry name" value="Ferredoxin reductase-like, C-terminal NADP-linked domain"/>
    <property type="match status" value="1"/>
</dbReference>
<dbReference type="SUPFAM" id="SSF52218">
    <property type="entry name" value="Flavoproteins"/>
    <property type="match status" value="1"/>
</dbReference>
<dbReference type="SUPFAM" id="SSF63380">
    <property type="entry name" value="Riboflavin synthase domain-like"/>
    <property type="match status" value="1"/>
</dbReference>
<dbReference type="PROSITE" id="PS51384">
    <property type="entry name" value="FAD_FR"/>
    <property type="match status" value="1"/>
</dbReference>
<dbReference type="PROSITE" id="PS50902">
    <property type="entry name" value="FLAVODOXIN_LIKE"/>
    <property type="match status" value="1"/>
</dbReference>
<sequence>MQLQVMNSPFNQEQAELLNRLLPTLTESQKIWLSGYLSAQSVSAQEAAGTPAAAVSAEAPAPAVSKEVTVLYGSQTGNAQGLAENAGKQLEQSGFQVTVSSMSDFKPNQLKKVTNLLIVVSTHGEGEPPDNALSFHEFLHGRRAPKLEDLRFSVLALGDSSYEFFCQTGKEFDQRLEELGGKRISPRVDCDLDYDEPAAEWLEGVLKGLNEAGGGSAAPAPAAASQTGESSYSRTNPFRAEVLENLNLNGRGSNKETRHVELSLEGSGLTYEPGDSLGVYPENDPELVELLLKEMNWDPEEIVTLNKQGDVRPLKEALISHYEITVLTKPLLEQAAQLTGNDELRELLAPGNEENVKAYIEGRDLLDLVRDYGPFSVSAQEFVSILRKMPARLYSIASSLSANPDEVHLTIGAVRYDAHGRERKGVCSILCAERLQPGDTLPVYVQHNQNFKLPKDPETPIIMVGPGTGVAPFRSFMQEREETGAEGKAWMFFGDQHFVTDFLYQTEWQNWLKDGVLTKMDVAFSRDTEEKVYVQHRMLEHSAELFEWLQEGAAVYICGDEKHMAHDVHNTLLEIIEKEGNMSREEAEAYLADMQQQKRYQRDVY</sequence>
<name>CYSJ_BACSU</name>
<keyword id="KW-0028">Amino-acid biosynthesis</keyword>
<keyword id="KW-0198">Cysteine biosynthesis</keyword>
<keyword id="KW-0249">Electron transport</keyword>
<keyword id="KW-0274">FAD</keyword>
<keyword id="KW-0285">Flavoprotein</keyword>
<keyword id="KW-0288">FMN</keyword>
<keyword id="KW-0521">NADP</keyword>
<keyword id="KW-0560">Oxidoreductase</keyword>
<keyword id="KW-1185">Reference proteome</keyword>
<keyword id="KW-0813">Transport</keyword>
<gene>
    <name type="primary">cysJ</name>
    <name type="synonym">yvgR</name>
    <name type="ordered locus">BSU33440</name>
</gene>
<protein>
    <recommendedName>
        <fullName>Sulfite reductase [NADPH] flavoprotein alpha-component</fullName>
        <shortName>SiR-FP</shortName>
        <ecNumber>1.8.1.2</ecNumber>
    </recommendedName>
</protein>
<evidence type="ECO:0000250" key="1"/>
<evidence type="ECO:0000255" key="2">
    <source>
        <dbReference type="PROSITE-ProRule" id="PRU00088"/>
    </source>
</evidence>
<evidence type="ECO:0000255" key="3">
    <source>
        <dbReference type="PROSITE-ProRule" id="PRU00716"/>
    </source>
</evidence>
<evidence type="ECO:0000256" key="4">
    <source>
        <dbReference type="SAM" id="MobiDB-lite"/>
    </source>
</evidence>
<evidence type="ECO:0000269" key="5">
    <source>
    </source>
</evidence>
<evidence type="ECO:0000269" key="6">
    <source>
    </source>
</evidence>
<evidence type="ECO:0000305" key="7">
    <source>
    </source>
</evidence>
<proteinExistence type="evidence at protein level"/>
<feature type="chain" id="PRO_0000388469" description="Sulfite reductase [NADPH] flavoprotein alpha-component">
    <location>
        <begin position="1"/>
        <end position="605"/>
    </location>
</feature>
<feature type="domain" description="Flavodoxin-like" evidence="2">
    <location>
        <begin position="68"/>
        <end position="206"/>
    </location>
</feature>
<feature type="domain" description="FAD-binding FR-type" evidence="3">
    <location>
        <begin position="235"/>
        <end position="454"/>
    </location>
</feature>
<feature type="region of interest" description="Disordered" evidence="4">
    <location>
        <begin position="213"/>
        <end position="234"/>
    </location>
</feature>
<feature type="binding site" evidence="2">
    <location>
        <begin position="74"/>
        <end position="78"/>
    </location>
    <ligand>
        <name>FMN</name>
        <dbReference type="ChEBI" id="CHEBI:58210"/>
    </ligand>
</feature>
<feature type="binding site" evidence="2">
    <location>
        <begin position="121"/>
        <end position="126"/>
    </location>
    <ligand>
        <name>FMN</name>
        <dbReference type="ChEBI" id="CHEBI:58210"/>
    </ligand>
</feature>
<feature type="binding site" evidence="2">
    <location>
        <begin position="154"/>
        <end position="185"/>
    </location>
    <ligand>
        <name>FMN</name>
        <dbReference type="ChEBI" id="CHEBI:58210"/>
    </ligand>
</feature>
<feature type="binding site" evidence="1">
    <location>
        <begin position="392"/>
        <end position="395"/>
    </location>
    <ligand>
        <name>FAD</name>
        <dbReference type="ChEBI" id="CHEBI:57692"/>
    </ligand>
</feature>
<feature type="binding site" evidence="1">
    <location>
        <position position="495"/>
    </location>
    <ligand>
        <name>NADP(+)</name>
        <dbReference type="ChEBI" id="CHEBI:58349"/>
    </ligand>
</feature>
<feature type="binding site" evidence="1">
    <location>
        <begin position="525"/>
        <end position="533"/>
    </location>
    <ligand>
        <name>NADP(+)</name>
        <dbReference type="ChEBI" id="CHEBI:58349"/>
    </ligand>
</feature>